<keyword id="KW-0325">Glycoprotein</keyword>
<keyword id="KW-1185">Reference proteome</keyword>
<keyword id="KW-0732">Signal</keyword>
<reference key="1">
    <citation type="journal article" date="1994" name="J. Biol. Chem.">
        <title>Genomic organization of a gene encoding the spicule matrix protein SM30 in the sea urchin Strongylocentrotus purpuratus.</title>
        <authorList>
            <person name="Akasaka K."/>
            <person name="Frudakis T.N."/>
            <person name="Killian C.E."/>
            <person name="George N.C."/>
            <person name="Yamasu K."/>
            <person name="Khaner O."/>
            <person name="Wilt F.H."/>
        </authorList>
    </citation>
    <scope>NUCLEOTIDE SEQUENCE [GENOMIC DNA]</scope>
    <source>
        <tissue>Sperm</tissue>
    </source>
</reference>
<sequence length="290" mass="31686">MRGFVYVLVCVLALASFSRAQLPGGGGPVLPGGGPTIGPVNPDPTRTEVCAKFWVQEGNSCYLFDSGAFLRQVAASRPVVVNNENGLFQAAANMYCGQMHPNASLVTVNSLAENNFLYEWAVRMMVEPEPVWIGLHAGPMGQWQWYSGEPVTYTNWERMTAPMAEPGLGAMIFDADIIAQMFNNQVEITPQWVPEQAINDRHALICEYHPSGMTAAAAAATNAPTFPPMATAPPMAATTRGPVMFQNNPRNLVNSLTGGRFGGSLLHEIPRRQRMRPSNYRKNPYFGIQP</sequence>
<dbReference type="EMBL" id="U05962">
    <property type="protein sequence ID" value="AAB60620.1"/>
    <property type="molecule type" value="Genomic_DNA"/>
</dbReference>
<dbReference type="EMBL" id="U05961">
    <property type="protein sequence ID" value="AAB60620.1"/>
    <property type="status" value="JOINED"/>
    <property type="molecule type" value="Genomic_DNA"/>
</dbReference>
<dbReference type="PIR" id="A54855">
    <property type="entry name" value="A54855"/>
</dbReference>
<dbReference type="SMR" id="Q26646"/>
<dbReference type="STRING" id="7668.Q26646"/>
<dbReference type="GlyCosmos" id="Q26646">
    <property type="glycosylation" value="1 site, No reported glycans"/>
</dbReference>
<dbReference type="HOGENOM" id="CLU_960835_0_0_1"/>
<dbReference type="InParanoid" id="Q26646"/>
<dbReference type="Proteomes" id="UP000007110">
    <property type="component" value="Unassembled WGS sequence"/>
</dbReference>
<dbReference type="GO" id="GO:0009897">
    <property type="term" value="C:external side of plasma membrane"/>
    <property type="evidence" value="ECO:0000318"/>
    <property type="project" value="GO_Central"/>
</dbReference>
<dbReference type="GO" id="GO:0030246">
    <property type="term" value="F:carbohydrate binding"/>
    <property type="evidence" value="ECO:0000318"/>
    <property type="project" value="GO_Central"/>
</dbReference>
<dbReference type="GO" id="GO:0038187">
    <property type="term" value="F:pattern recognition receptor activity"/>
    <property type="evidence" value="ECO:0000318"/>
    <property type="project" value="GO_Central"/>
</dbReference>
<dbReference type="GO" id="GO:0006955">
    <property type="term" value="P:immune response"/>
    <property type="evidence" value="ECO:0000318"/>
    <property type="project" value="GO_Central"/>
</dbReference>
<dbReference type="CDD" id="cd00037">
    <property type="entry name" value="CLECT"/>
    <property type="match status" value="1"/>
</dbReference>
<dbReference type="Gene3D" id="3.10.100.10">
    <property type="entry name" value="Mannose-Binding Protein A, subunit A"/>
    <property type="match status" value="1"/>
</dbReference>
<dbReference type="InterPro" id="IPR001304">
    <property type="entry name" value="C-type_lectin-like"/>
</dbReference>
<dbReference type="InterPro" id="IPR016186">
    <property type="entry name" value="C-type_lectin-like/link_sf"/>
</dbReference>
<dbReference type="InterPro" id="IPR016187">
    <property type="entry name" value="CTDL_fold"/>
</dbReference>
<dbReference type="InterPro" id="IPR051004">
    <property type="entry name" value="DC-SIGN_domain-containing"/>
</dbReference>
<dbReference type="PANTHER" id="PTHR22802">
    <property type="entry name" value="C-TYPE LECTIN SUPERFAMILY MEMBER"/>
    <property type="match status" value="1"/>
</dbReference>
<dbReference type="PANTHER" id="PTHR22802:SF379">
    <property type="entry name" value="CHONDROITIN SULFATE PROTEOGLYCAN 2 ISOFORM X1"/>
    <property type="match status" value="1"/>
</dbReference>
<dbReference type="Pfam" id="PF00059">
    <property type="entry name" value="Lectin_C"/>
    <property type="match status" value="1"/>
</dbReference>
<dbReference type="SMART" id="SM00034">
    <property type="entry name" value="CLECT"/>
    <property type="match status" value="1"/>
</dbReference>
<dbReference type="SUPFAM" id="SSF56436">
    <property type="entry name" value="C-type lectin-like"/>
    <property type="match status" value="1"/>
</dbReference>
<dbReference type="PROSITE" id="PS50041">
    <property type="entry name" value="C_TYPE_LECTIN_2"/>
    <property type="match status" value="1"/>
</dbReference>
<accession>Q26646</accession>
<protein>
    <recommendedName>
        <fullName>30 kDa spicule matrix protein alpha</fullName>
    </recommendedName>
    <alternativeName>
        <fullName>SM30-alpha</fullName>
    </alternativeName>
</protein>
<gene>
    <name type="primary">SM30A</name>
</gene>
<proteinExistence type="evidence at transcript level"/>
<name>SM30A_STRPU</name>
<evidence type="ECO:0000250" key="1"/>
<evidence type="ECO:0000255" key="2"/>
<evidence type="ECO:0000255" key="3">
    <source>
        <dbReference type="PROSITE-ProRule" id="PRU00040"/>
    </source>
</evidence>
<feature type="signal peptide" evidence="2">
    <location>
        <begin position="1"/>
        <end position="20"/>
    </location>
</feature>
<feature type="chain" id="PRO_0000017560" description="30 kDa spicule matrix protein alpha">
    <location>
        <begin position="21"/>
        <end position="290"/>
    </location>
</feature>
<feature type="domain" description="C-type lectin" evidence="3">
    <location>
        <begin position="92"/>
        <end position="162"/>
    </location>
</feature>
<feature type="glycosylation site" description="N-linked (GlcNAc...) asparagine" evidence="2">
    <location>
        <position position="102"/>
    </location>
</feature>
<organism>
    <name type="scientific">Strongylocentrotus purpuratus</name>
    <name type="common">Purple sea urchin</name>
    <dbReference type="NCBI Taxonomy" id="7668"/>
    <lineage>
        <taxon>Eukaryota</taxon>
        <taxon>Metazoa</taxon>
        <taxon>Echinodermata</taxon>
        <taxon>Eleutherozoa</taxon>
        <taxon>Echinozoa</taxon>
        <taxon>Echinoidea</taxon>
        <taxon>Euechinoidea</taxon>
        <taxon>Echinacea</taxon>
        <taxon>Camarodonta</taxon>
        <taxon>Echinidea</taxon>
        <taxon>Strongylocentrotidae</taxon>
        <taxon>Strongylocentrotus</taxon>
    </lineage>
</organism>
<comment type="function">
    <text evidence="1">Matrix protein of the sea urchin embryo spicule. The function of the matrix proteins is to direct crystal growth in certain orientations and inhibit growth in others (By similarity).</text>
</comment>
<comment type="tissue specificity">
    <text>Accumulates exclusively in mineralized tissues.</text>
</comment>
<comment type="developmental stage">
    <text>Expressed at the time of spicule formation in the embryo.</text>
</comment>